<comment type="function">
    <text evidence="1">DNA ligase that seals nicks in double-stranded DNA during DNA replication, DNA recombination and DNA repair.</text>
</comment>
<comment type="catalytic activity">
    <reaction evidence="1">
        <text>ATP + (deoxyribonucleotide)n-3'-hydroxyl + 5'-phospho-(deoxyribonucleotide)m = (deoxyribonucleotide)n+m + AMP + diphosphate.</text>
        <dbReference type="EC" id="6.5.1.1"/>
    </reaction>
</comment>
<comment type="cofactor">
    <cofactor evidence="1">
        <name>Mg(2+)</name>
        <dbReference type="ChEBI" id="CHEBI:18420"/>
    </cofactor>
</comment>
<comment type="activity regulation">
    <text evidence="2">Inhibited by PCNA123 and PCNA323.</text>
</comment>
<comment type="similarity">
    <text evidence="1">Belongs to the ATP-dependent DNA ligase family.</text>
</comment>
<evidence type="ECO:0000255" key="1">
    <source>
        <dbReference type="HAMAP-Rule" id="MF_00407"/>
    </source>
</evidence>
<evidence type="ECO:0000269" key="2">
    <source>
    </source>
</evidence>
<sequence>MEFKLIAEYFDKLEKISSRLQLTALLTDLFKKADKNVIDKVVYLIQGKLWPDFLGYPELGVGEKLLIKAISIAVNVKEEVVEEQLKVVGDLGEVAMRLKKTPQSASILSFLGAQSNEGLTVEETYESLTKIALASGEGSRDIKIRSLAGLLKKASPLEAKYIVRFVDGRLRVGIGDATIMDALSTAFTGSTSFRPLIERAYNLRADLGNIAKIIAQQGVEALKDIKPQVGIPIRPMLAERMSDPAEILAKVGGEALVDYKYDGERAQIHKKDKEVYIFSRRLENITRMYPDVVEYVREYINANEVIIEGEIVAVDPESNEIRPFQELMHRKRKNDINEAIKEYPVNVYLFDLMLYEDADYTMKPLPERRKKLEEVIKPNDKLHIAHHIYTNNVDKLMEFFYDAISNGAEGVMVKSVAKDSIYQAGSRGFLWIKLKRDYQSEMADSVDLVVVGAFYGRGKRGGKLSSLLMAAYDPETDTFKTVCKVASGFSDAELDELQKKLMEIKLDKKDPRVDSQLEPDIWVEPKYVAEIIGAEITLSPEHTCCKDMVSKGAGLSVRFPRFIRWRDDKSIEDATTPKEIYEMYKMKLRKKEEEQHTDEA</sequence>
<dbReference type="EC" id="6.5.1.1" evidence="1"/>
<dbReference type="EMBL" id="BA000023">
    <property type="protein sequence ID" value="BAB65183.1"/>
    <property type="molecule type" value="Genomic_DNA"/>
</dbReference>
<dbReference type="RefSeq" id="WP_010978165.1">
    <property type="nucleotide sequence ID" value="NC_003106.2"/>
</dbReference>
<dbReference type="SMR" id="Q976G4"/>
<dbReference type="STRING" id="273063.STK_02230"/>
<dbReference type="KEGG" id="sto:STK_02230"/>
<dbReference type="PATRIC" id="fig|273063.9.peg.271"/>
<dbReference type="eggNOG" id="arCOG01347">
    <property type="taxonomic scope" value="Archaea"/>
</dbReference>
<dbReference type="OrthoDB" id="31274at2157"/>
<dbReference type="BRENDA" id="6.5.1.1">
    <property type="organism ID" value="15396"/>
</dbReference>
<dbReference type="Proteomes" id="UP000001015">
    <property type="component" value="Chromosome"/>
</dbReference>
<dbReference type="GO" id="GO:0005524">
    <property type="term" value="F:ATP binding"/>
    <property type="evidence" value="ECO:0007669"/>
    <property type="project" value="UniProtKB-UniRule"/>
</dbReference>
<dbReference type="GO" id="GO:0003677">
    <property type="term" value="F:DNA binding"/>
    <property type="evidence" value="ECO:0007669"/>
    <property type="project" value="InterPro"/>
</dbReference>
<dbReference type="GO" id="GO:0003910">
    <property type="term" value="F:DNA ligase (ATP) activity"/>
    <property type="evidence" value="ECO:0007669"/>
    <property type="project" value="UniProtKB-UniRule"/>
</dbReference>
<dbReference type="GO" id="GO:0046872">
    <property type="term" value="F:metal ion binding"/>
    <property type="evidence" value="ECO:0007669"/>
    <property type="project" value="UniProtKB-KW"/>
</dbReference>
<dbReference type="GO" id="GO:0051301">
    <property type="term" value="P:cell division"/>
    <property type="evidence" value="ECO:0007669"/>
    <property type="project" value="UniProtKB-KW"/>
</dbReference>
<dbReference type="GO" id="GO:0071897">
    <property type="term" value="P:DNA biosynthetic process"/>
    <property type="evidence" value="ECO:0007669"/>
    <property type="project" value="InterPro"/>
</dbReference>
<dbReference type="GO" id="GO:0006310">
    <property type="term" value="P:DNA recombination"/>
    <property type="evidence" value="ECO:0007669"/>
    <property type="project" value="UniProtKB-UniRule"/>
</dbReference>
<dbReference type="GO" id="GO:0006281">
    <property type="term" value="P:DNA repair"/>
    <property type="evidence" value="ECO:0007669"/>
    <property type="project" value="UniProtKB-UniRule"/>
</dbReference>
<dbReference type="GO" id="GO:0006273">
    <property type="term" value="P:lagging strand elongation"/>
    <property type="evidence" value="ECO:0007669"/>
    <property type="project" value="TreeGrafter"/>
</dbReference>
<dbReference type="CDD" id="cd07901">
    <property type="entry name" value="Adenylation_DNA_ligase_Arch_LigB"/>
    <property type="match status" value="1"/>
</dbReference>
<dbReference type="CDD" id="cd07969">
    <property type="entry name" value="OBF_DNA_ligase_I"/>
    <property type="match status" value="1"/>
</dbReference>
<dbReference type="FunFam" id="1.10.3260.10:FF:000007">
    <property type="entry name" value="DNA ligase"/>
    <property type="match status" value="1"/>
</dbReference>
<dbReference type="FunFam" id="2.40.50.140:FF:000062">
    <property type="entry name" value="DNA ligase"/>
    <property type="match status" value="1"/>
</dbReference>
<dbReference type="FunFam" id="3.30.470.30:FF:000012">
    <property type="entry name" value="Probable DNA ligase"/>
    <property type="match status" value="1"/>
</dbReference>
<dbReference type="Gene3D" id="1.10.3260.10">
    <property type="entry name" value="DNA ligase, ATP-dependent, N-terminal domain"/>
    <property type="match status" value="1"/>
</dbReference>
<dbReference type="Gene3D" id="3.30.470.30">
    <property type="entry name" value="DNA ligase/mRNA capping enzyme"/>
    <property type="match status" value="1"/>
</dbReference>
<dbReference type="Gene3D" id="2.40.50.140">
    <property type="entry name" value="Nucleic acid-binding proteins"/>
    <property type="match status" value="1"/>
</dbReference>
<dbReference type="HAMAP" id="MF_00407">
    <property type="entry name" value="DNA_ligase"/>
    <property type="match status" value="1"/>
</dbReference>
<dbReference type="InterPro" id="IPR050191">
    <property type="entry name" value="ATP-dep_DNA_ligase"/>
</dbReference>
<dbReference type="InterPro" id="IPR022865">
    <property type="entry name" value="DNA_ligae_ATP-dep_bac/arc"/>
</dbReference>
<dbReference type="InterPro" id="IPR000977">
    <property type="entry name" value="DNA_ligase_ATP-dep"/>
</dbReference>
<dbReference type="InterPro" id="IPR012309">
    <property type="entry name" value="DNA_ligase_ATP-dep_C"/>
</dbReference>
<dbReference type="InterPro" id="IPR012310">
    <property type="entry name" value="DNA_ligase_ATP-dep_cent"/>
</dbReference>
<dbReference type="InterPro" id="IPR016059">
    <property type="entry name" value="DNA_ligase_ATP-dep_CS"/>
</dbReference>
<dbReference type="InterPro" id="IPR012308">
    <property type="entry name" value="DNA_ligase_ATP-dep_N"/>
</dbReference>
<dbReference type="InterPro" id="IPR036599">
    <property type="entry name" value="DNA_ligase_N_sf"/>
</dbReference>
<dbReference type="InterPro" id="IPR012340">
    <property type="entry name" value="NA-bd_OB-fold"/>
</dbReference>
<dbReference type="NCBIfam" id="TIGR00574">
    <property type="entry name" value="dnl1"/>
    <property type="match status" value="1"/>
</dbReference>
<dbReference type="PANTHER" id="PTHR45674:SF4">
    <property type="entry name" value="DNA LIGASE 1"/>
    <property type="match status" value="1"/>
</dbReference>
<dbReference type="PANTHER" id="PTHR45674">
    <property type="entry name" value="DNA LIGASE 1/3 FAMILY MEMBER"/>
    <property type="match status" value="1"/>
</dbReference>
<dbReference type="Pfam" id="PF04679">
    <property type="entry name" value="DNA_ligase_A_C"/>
    <property type="match status" value="1"/>
</dbReference>
<dbReference type="Pfam" id="PF01068">
    <property type="entry name" value="DNA_ligase_A_M"/>
    <property type="match status" value="1"/>
</dbReference>
<dbReference type="Pfam" id="PF04675">
    <property type="entry name" value="DNA_ligase_A_N"/>
    <property type="match status" value="1"/>
</dbReference>
<dbReference type="SUPFAM" id="SSF117018">
    <property type="entry name" value="ATP-dependent DNA ligase DNA-binding domain"/>
    <property type="match status" value="1"/>
</dbReference>
<dbReference type="SUPFAM" id="SSF56091">
    <property type="entry name" value="DNA ligase/mRNA capping enzyme, catalytic domain"/>
    <property type="match status" value="1"/>
</dbReference>
<dbReference type="SUPFAM" id="SSF50249">
    <property type="entry name" value="Nucleic acid-binding proteins"/>
    <property type="match status" value="1"/>
</dbReference>
<dbReference type="PROSITE" id="PS00697">
    <property type="entry name" value="DNA_LIGASE_A1"/>
    <property type="match status" value="1"/>
</dbReference>
<dbReference type="PROSITE" id="PS00333">
    <property type="entry name" value="DNA_LIGASE_A2"/>
    <property type="match status" value="1"/>
</dbReference>
<dbReference type="PROSITE" id="PS50160">
    <property type="entry name" value="DNA_LIGASE_A3"/>
    <property type="match status" value="1"/>
</dbReference>
<proteinExistence type="inferred from homology"/>
<organism>
    <name type="scientific">Sulfurisphaera tokodaii (strain DSM 16993 / JCM 10545 / NBRC 100140 / 7)</name>
    <name type="common">Sulfolobus tokodaii</name>
    <dbReference type="NCBI Taxonomy" id="273063"/>
    <lineage>
        <taxon>Archaea</taxon>
        <taxon>Thermoproteota</taxon>
        <taxon>Thermoprotei</taxon>
        <taxon>Sulfolobales</taxon>
        <taxon>Sulfolobaceae</taxon>
        <taxon>Sulfurisphaera</taxon>
    </lineage>
</organism>
<name>DNLI_SULTO</name>
<feature type="chain" id="PRO_0000059619" description="DNA ligase">
    <location>
        <begin position="1"/>
        <end position="600"/>
    </location>
</feature>
<feature type="active site" description="N6-AMP-lysine intermediate" evidence="1">
    <location>
        <position position="260"/>
    </location>
</feature>
<feature type="binding site" evidence="1">
    <location>
        <position position="258"/>
    </location>
    <ligand>
        <name>ATP</name>
        <dbReference type="ChEBI" id="CHEBI:30616"/>
    </ligand>
</feature>
<feature type="binding site" evidence="1">
    <location>
        <position position="265"/>
    </location>
    <ligand>
        <name>ATP</name>
        <dbReference type="ChEBI" id="CHEBI:30616"/>
    </ligand>
</feature>
<feature type="binding site" evidence="1">
    <location>
        <position position="280"/>
    </location>
    <ligand>
        <name>ATP</name>
        <dbReference type="ChEBI" id="CHEBI:30616"/>
    </ligand>
</feature>
<feature type="binding site" evidence="1">
    <location>
        <position position="310"/>
    </location>
    <ligand>
        <name>ATP</name>
        <dbReference type="ChEBI" id="CHEBI:30616"/>
    </ligand>
</feature>
<feature type="binding site" evidence="1">
    <location>
        <position position="350"/>
    </location>
    <ligand>
        <name>ATP</name>
        <dbReference type="ChEBI" id="CHEBI:30616"/>
    </ligand>
</feature>
<feature type="binding site" evidence="1">
    <location>
        <position position="427"/>
    </location>
    <ligand>
        <name>ATP</name>
        <dbReference type="ChEBI" id="CHEBI:30616"/>
    </ligand>
</feature>
<feature type="binding site" evidence="1">
    <location>
        <position position="433"/>
    </location>
    <ligand>
        <name>ATP</name>
        <dbReference type="ChEBI" id="CHEBI:30616"/>
    </ligand>
</feature>
<reference key="1">
    <citation type="journal article" date="2001" name="DNA Res.">
        <title>Complete genome sequence of an aerobic thermoacidophilic Crenarchaeon, Sulfolobus tokodaii strain7.</title>
        <authorList>
            <person name="Kawarabayasi Y."/>
            <person name="Hino Y."/>
            <person name="Horikawa H."/>
            <person name="Jin-no K."/>
            <person name="Takahashi M."/>
            <person name="Sekine M."/>
            <person name="Baba S."/>
            <person name="Ankai A."/>
            <person name="Kosugi H."/>
            <person name="Hosoyama A."/>
            <person name="Fukui S."/>
            <person name="Nagai Y."/>
            <person name="Nishijima K."/>
            <person name="Otsuka R."/>
            <person name="Nakazawa H."/>
            <person name="Takamiya M."/>
            <person name="Kato Y."/>
            <person name="Yoshizawa T."/>
            <person name="Tanaka T."/>
            <person name="Kudoh Y."/>
            <person name="Yamazaki J."/>
            <person name="Kushida N."/>
            <person name="Oguchi A."/>
            <person name="Aoki K."/>
            <person name="Masuda S."/>
            <person name="Yanagii M."/>
            <person name="Nishimura M."/>
            <person name="Yamagishi A."/>
            <person name="Oshima T."/>
            <person name="Kikuchi H."/>
        </authorList>
    </citation>
    <scope>NUCLEOTIDE SEQUENCE [LARGE SCALE GENOMIC DNA]</scope>
    <source>
        <strain>DSM 16993 / JCM 10545 / NBRC 100140 / 7</strain>
    </source>
</reference>
<reference key="2">
    <citation type="journal article" date="2008" name="Biochem. Biophys. Res. Commun.">
        <title>Spatial subunit distribution and in vitro functions of the novel trimeric PCNA complex from Sulfolobus tokodaii.</title>
        <authorList>
            <person name="Lu S."/>
            <person name="Li Z."/>
            <person name="Wang Z."/>
            <person name="Ma X."/>
            <person name="Sheng D."/>
            <person name="Ni J."/>
            <person name="Shen Y."/>
        </authorList>
    </citation>
    <scope>ACTIVITY REGULATION</scope>
    <source>
        <strain>DSM 16993 / JCM 10545 / NBRC 100140 / 7</strain>
    </source>
</reference>
<accession>Q976G4</accession>
<gene>
    <name evidence="1" type="primary">lig</name>
    <name type="ordered locus">STK_02230</name>
</gene>
<keyword id="KW-0067">ATP-binding</keyword>
<keyword id="KW-0131">Cell cycle</keyword>
<keyword id="KW-0132">Cell division</keyword>
<keyword id="KW-0227">DNA damage</keyword>
<keyword id="KW-0233">DNA recombination</keyword>
<keyword id="KW-0234">DNA repair</keyword>
<keyword id="KW-0235">DNA replication</keyword>
<keyword id="KW-0436">Ligase</keyword>
<keyword id="KW-0460">Magnesium</keyword>
<keyword id="KW-0479">Metal-binding</keyword>
<keyword id="KW-0547">Nucleotide-binding</keyword>
<keyword id="KW-1185">Reference proteome</keyword>
<protein>
    <recommendedName>
        <fullName evidence="1">DNA ligase</fullName>
        <ecNumber evidence="1">6.5.1.1</ecNumber>
    </recommendedName>
    <alternativeName>
        <fullName evidence="1">Polydeoxyribonucleotide synthase [ATP]</fullName>
    </alternativeName>
</protein>